<reference key="1">
    <citation type="journal article" date="2007" name="J. Bacteriol.">
        <title>Complete genome sequence of Haemophilus somnus (Histophilus somni) strain 129Pt and comparison to Haemophilus ducreyi 35000HP and Haemophilus influenzae Rd.</title>
        <authorList>
            <person name="Challacombe J.F."/>
            <person name="Duncan A.J."/>
            <person name="Brettin T.S."/>
            <person name="Bruce D."/>
            <person name="Chertkov O."/>
            <person name="Detter J.C."/>
            <person name="Han C.S."/>
            <person name="Misra M."/>
            <person name="Richardson P."/>
            <person name="Tapia R."/>
            <person name="Thayer N."/>
            <person name="Xie G."/>
            <person name="Inzana T.J."/>
        </authorList>
    </citation>
    <scope>NUCLEOTIDE SEQUENCE [LARGE SCALE GENOMIC DNA]</scope>
    <source>
        <strain>129Pt</strain>
    </source>
</reference>
<accession>Q0I1P7</accession>
<dbReference type="EMBL" id="CP000436">
    <property type="protein sequence ID" value="ABI24524.1"/>
    <property type="molecule type" value="Genomic_DNA"/>
</dbReference>
<dbReference type="SMR" id="Q0I1P7"/>
<dbReference type="KEGG" id="hso:HS_0246"/>
<dbReference type="eggNOG" id="COG0211">
    <property type="taxonomic scope" value="Bacteria"/>
</dbReference>
<dbReference type="HOGENOM" id="CLU_095424_4_1_6"/>
<dbReference type="GO" id="GO:0022625">
    <property type="term" value="C:cytosolic large ribosomal subunit"/>
    <property type="evidence" value="ECO:0007669"/>
    <property type="project" value="TreeGrafter"/>
</dbReference>
<dbReference type="GO" id="GO:0003735">
    <property type="term" value="F:structural constituent of ribosome"/>
    <property type="evidence" value="ECO:0007669"/>
    <property type="project" value="InterPro"/>
</dbReference>
<dbReference type="GO" id="GO:0006412">
    <property type="term" value="P:translation"/>
    <property type="evidence" value="ECO:0007669"/>
    <property type="project" value="UniProtKB-UniRule"/>
</dbReference>
<dbReference type="FunFam" id="2.40.50.100:FF:000001">
    <property type="entry name" value="50S ribosomal protein L27"/>
    <property type="match status" value="1"/>
</dbReference>
<dbReference type="Gene3D" id="2.40.50.100">
    <property type="match status" value="1"/>
</dbReference>
<dbReference type="HAMAP" id="MF_00539">
    <property type="entry name" value="Ribosomal_bL27"/>
    <property type="match status" value="1"/>
</dbReference>
<dbReference type="InterPro" id="IPR001684">
    <property type="entry name" value="Ribosomal_bL27"/>
</dbReference>
<dbReference type="InterPro" id="IPR018261">
    <property type="entry name" value="Ribosomal_bL27_CS"/>
</dbReference>
<dbReference type="NCBIfam" id="TIGR00062">
    <property type="entry name" value="L27"/>
    <property type="match status" value="1"/>
</dbReference>
<dbReference type="PANTHER" id="PTHR15893:SF0">
    <property type="entry name" value="LARGE RIBOSOMAL SUBUNIT PROTEIN BL27M"/>
    <property type="match status" value="1"/>
</dbReference>
<dbReference type="PANTHER" id="PTHR15893">
    <property type="entry name" value="RIBOSOMAL PROTEIN L27"/>
    <property type="match status" value="1"/>
</dbReference>
<dbReference type="Pfam" id="PF01016">
    <property type="entry name" value="Ribosomal_L27"/>
    <property type="match status" value="1"/>
</dbReference>
<dbReference type="PRINTS" id="PR00063">
    <property type="entry name" value="RIBOSOMALL27"/>
</dbReference>
<dbReference type="SUPFAM" id="SSF110324">
    <property type="entry name" value="Ribosomal L27 protein-like"/>
    <property type="match status" value="1"/>
</dbReference>
<dbReference type="PROSITE" id="PS00831">
    <property type="entry name" value="RIBOSOMAL_L27"/>
    <property type="match status" value="1"/>
</dbReference>
<feature type="chain" id="PRO_1000017493" description="Large ribosomal subunit protein bL27">
    <location>
        <begin position="1"/>
        <end position="85"/>
    </location>
</feature>
<feature type="region of interest" description="Disordered" evidence="2">
    <location>
        <begin position="1"/>
        <end position="20"/>
    </location>
</feature>
<evidence type="ECO:0000255" key="1">
    <source>
        <dbReference type="HAMAP-Rule" id="MF_00539"/>
    </source>
</evidence>
<evidence type="ECO:0000256" key="2">
    <source>
        <dbReference type="SAM" id="MobiDB-lite"/>
    </source>
</evidence>
<evidence type="ECO:0000305" key="3"/>
<keyword id="KW-0687">Ribonucleoprotein</keyword>
<keyword id="KW-0689">Ribosomal protein</keyword>
<comment type="similarity">
    <text evidence="1">Belongs to the bacterial ribosomal protein bL27 family.</text>
</comment>
<gene>
    <name evidence="1" type="primary">rpmA</name>
    <name type="ordered locus">HS_0246</name>
</gene>
<proteinExistence type="inferred from homology"/>
<name>RL27_HISS1</name>
<sequence>MATKKAGGSTRNGRDSEAKRLGVKRFGGESVLAGSIIVRQRGTKFHAGSNVGMGKDHTLFATADGKVKFEVKGEKSRKYVSVVAE</sequence>
<protein>
    <recommendedName>
        <fullName evidence="1">Large ribosomal subunit protein bL27</fullName>
    </recommendedName>
    <alternativeName>
        <fullName evidence="3">50S ribosomal protein L27</fullName>
    </alternativeName>
</protein>
<organism>
    <name type="scientific">Histophilus somni (strain 129Pt)</name>
    <name type="common">Haemophilus somnus</name>
    <dbReference type="NCBI Taxonomy" id="205914"/>
    <lineage>
        <taxon>Bacteria</taxon>
        <taxon>Pseudomonadati</taxon>
        <taxon>Pseudomonadota</taxon>
        <taxon>Gammaproteobacteria</taxon>
        <taxon>Pasteurellales</taxon>
        <taxon>Pasteurellaceae</taxon>
        <taxon>Histophilus</taxon>
    </lineage>
</organism>